<feature type="initiator methionine" description="Removed" evidence="1">
    <location>
        <position position="1"/>
    </location>
</feature>
<feature type="chain" id="PRO_0000131067" description="Large ribosomal subunit protein uL6">
    <location>
        <begin position="2"/>
        <end position="177"/>
    </location>
</feature>
<feature type="modified residue" description="N6-acetyllysine" evidence="2">
    <location>
        <position position="44"/>
    </location>
</feature>
<organism>
    <name type="scientific">Shigella flexneri</name>
    <dbReference type="NCBI Taxonomy" id="623"/>
    <lineage>
        <taxon>Bacteria</taxon>
        <taxon>Pseudomonadati</taxon>
        <taxon>Pseudomonadota</taxon>
        <taxon>Gammaproteobacteria</taxon>
        <taxon>Enterobacterales</taxon>
        <taxon>Enterobacteriaceae</taxon>
        <taxon>Shigella</taxon>
    </lineage>
</organism>
<name>RL6_SHIFL</name>
<keyword id="KW-0007">Acetylation</keyword>
<keyword id="KW-1185">Reference proteome</keyword>
<keyword id="KW-0687">Ribonucleoprotein</keyword>
<keyword id="KW-0689">Ribosomal protein</keyword>
<keyword id="KW-0694">RNA-binding</keyword>
<keyword id="KW-0699">rRNA-binding</keyword>
<reference key="1">
    <citation type="journal article" date="2002" name="Nucleic Acids Res.">
        <title>Genome sequence of Shigella flexneri 2a: insights into pathogenicity through comparison with genomes of Escherichia coli K12 and O157.</title>
        <authorList>
            <person name="Jin Q."/>
            <person name="Yuan Z."/>
            <person name="Xu J."/>
            <person name="Wang Y."/>
            <person name="Shen Y."/>
            <person name="Lu W."/>
            <person name="Wang J."/>
            <person name="Liu H."/>
            <person name="Yang J."/>
            <person name="Yang F."/>
            <person name="Zhang X."/>
            <person name="Zhang J."/>
            <person name="Yang G."/>
            <person name="Wu H."/>
            <person name="Qu D."/>
            <person name="Dong J."/>
            <person name="Sun L."/>
            <person name="Xue Y."/>
            <person name="Zhao A."/>
            <person name="Gao Y."/>
            <person name="Zhu J."/>
            <person name="Kan B."/>
            <person name="Ding K."/>
            <person name="Chen S."/>
            <person name="Cheng H."/>
            <person name="Yao Z."/>
            <person name="He B."/>
            <person name="Chen R."/>
            <person name="Ma D."/>
            <person name="Qiang B."/>
            <person name="Wen Y."/>
            <person name="Hou Y."/>
            <person name="Yu J."/>
        </authorList>
    </citation>
    <scope>NUCLEOTIDE SEQUENCE [LARGE SCALE GENOMIC DNA]</scope>
    <source>
        <strain>301 / Serotype 2a</strain>
    </source>
</reference>
<reference key="2">
    <citation type="journal article" date="2003" name="Infect. Immun.">
        <title>Complete genome sequence and comparative genomics of Shigella flexneri serotype 2a strain 2457T.</title>
        <authorList>
            <person name="Wei J."/>
            <person name="Goldberg M.B."/>
            <person name="Burland V."/>
            <person name="Venkatesan M.M."/>
            <person name="Deng W."/>
            <person name="Fournier G."/>
            <person name="Mayhew G.F."/>
            <person name="Plunkett G. III"/>
            <person name="Rose D.J."/>
            <person name="Darling A."/>
            <person name="Mau B."/>
            <person name="Perna N.T."/>
            <person name="Payne S.M."/>
            <person name="Runyen-Janecky L.J."/>
            <person name="Zhou S."/>
            <person name="Schwartz D.C."/>
            <person name="Blattner F.R."/>
        </authorList>
    </citation>
    <scope>NUCLEOTIDE SEQUENCE [LARGE SCALE GENOMIC DNA]</scope>
    <source>
        <strain>ATCC 700930 / 2457T / Serotype 2a</strain>
    </source>
</reference>
<accession>P0AG58</accession>
<accession>P02390</accession>
<sequence>MSRVAKAPVVVPAGVDVKINGQVITIKGKNGELTRTLNDAVEVKHADNTLTFGPRDGYADGWAQAGTARALLNSMVIGVTEGFTKKLQLVGVGYRAAVKGNVINLSLGFSHPVDHQLPAGITAECPTQTEIVLKGADKQVIGQVAADLRAYRRPEPYKGKGVRYADEVVRTKEAKKK</sequence>
<gene>
    <name evidence="2" type="primary">rplF</name>
    <name type="ordered locus">SF3337</name>
    <name type="ordered locus">S4425</name>
</gene>
<protein>
    <recommendedName>
        <fullName evidence="2">Large ribosomal subunit protein uL6</fullName>
    </recommendedName>
    <alternativeName>
        <fullName evidence="3">50S ribosomal protein L6</fullName>
    </alternativeName>
</protein>
<proteinExistence type="inferred from homology"/>
<comment type="function">
    <text evidence="2">This protein binds to the 23S rRNA, and is important in its secondary structure. It is located near the subunit interface in the base of the L7/L12 stalk, and near the tRNA binding site of the peptidyltransferase center.</text>
</comment>
<comment type="subunit">
    <text evidence="2">Part of the 50S ribosomal subunit.</text>
</comment>
<comment type="similarity">
    <text evidence="2">Belongs to the universal ribosomal protein uL6 family.</text>
</comment>
<dbReference type="EMBL" id="AE005674">
    <property type="protein sequence ID" value="AAN44800.1"/>
    <property type="molecule type" value="Genomic_DNA"/>
</dbReference>
<dbReference type="EMBL" id="AE014073">
    <property type="protein sequence ID" value="AAP19376.1"/>
    <property type="molecule type" value="Genomic_DNA"/>
</dbReference>
<dbReference type="RefSeq" id="NP_709093.1">
    <property type="nucleotide sequence ID" value="NC_004337.2"/>
</dbReference>
<dbReference type="RefSeq" id="WP_000091945.1">
    <property type="nucleotide sequence ID" value="NZ_WPGW01000088.1"/>
</dbReference>
<dbReference type="SMR" id="P0AG58"/>
<dbReference type="STRING" id="198214.SF3337"/>
<dbReference type="PaxDb" id="198214-SF3337"/>
<dbReference type="GeneID" id="1026981"/>
<dbReference type="GeneID" id="86948169"/>
<dbReference type="KEGG" id="sfl:SF3337"/>
<dbReference type="KEGG" id="sfx:S4425"/>
<dbReference type="PATRIC" id="fig|198214.7.peg.3946"/>
<dbReference type="HOGENOM" id="CLU_065464_1_2_6"/>
<dbReference type="Proteomes" id="UP000001006">
    <property type="component" value="Chromosome"/>
</dbReference>
<dbReference type="Proteomes" id="UP000002673">
    <property type="component" value="Chromosome"/>
</dbReference>
<dbReference type="GO" id="GO:0022625">
    <property type="term" value="C:cytosolic large ribosomal subunit"/>
    <property type="evidence" value="ECO:0007669"/>
    <property type="project" value="TreeGrafter"/>
</dbReference>
<dbReference type="GO" id="GO:0019843">
    <property type="term" value="F:rRNA binding"/>
    <property type="evidence" value="ECO:0007669"/>
    <property type="project" value="UniProtKB-UniRule"/>
</dbReference>
<dbReference type="GO" id="GO:0003735">
    <property type="term" value="F:structural constituent of ribosome"/>
    <property type="evidence" value="ECO:0007669"/>
    <property type="project" value="InterPro"/>
</dbReference>
<dbReference type="GO" id="GO:0002181">
    <property type="term" value="P:cytoplasmic translation"/>
    <property type="evidence" value="ECO:0007669"/>
    <property type="project" value="TreeGrafter"/>
</dbReference>
<dbReference type="FunFam" id="3.90.930.12:FF:000001">
    <property type="entry name" value="50S ribosomal protein L6"/>
    <property type="match status" value="1"/>
</dbReference>
<dbReference type="FunFam" id="3.90.930.12:FF:000002">
    <property type="entry name" value="50S ribosomal protein L6"/>
    <property type="match status" value="1"/>
</dbReference>
<dbReference type="Gene3D" id="3.90.930.12">
    <property type="entry name" value="Ribosomal protein L6, alpha-beta domain"/>
    <property type="match status" value="2"/>
</dbReference>
<dbReference type="HAMAP" id="MF_01365_B">
    <property type="entry name" value="Ribosomal_uL6_B"/>
    <property type="match status" value="1"/>
</dbReference>
<dbReference type="InterPro" id="IPR000702">
    <property type="entry name" value="Ribosomal_uL6-like"/>
</dbReference>
<dbReference type="InterPro" id="IPR036789">
    <property type="entry name" value="Ribosomal_uL6-like_a/b-dom_sf"/>
</dbReference>
<dbReference type="InterPro" id="IPR020040">
    <property type="entry name" value="Ribosomal_uL6_a/b-dom"/>
</dbReference>
<dbReference type="InterPro" id="IPR019906">
    <property type="entry name" value="Ribosomal_uL6_bac-type"/>
</dbReference>
<dbReference type="InterPro" id="IPR002358">
    <property type="entry name" value="Ribosomal_uL6_CS"/>
</dbReference>
<dbReference type="NCBIfam" id="TIGR03654">
    <property type="entry name" value="L6_bact"/>
    <property type="match status" value="1"/>
</dbReference>
<dbReference type="PANTHER" id="PTHR11655">
    <property type="entry name" value="60S/50S RIBOSOMAL PROTEIN L6/L9"/>
    <property type="match status" value="1"/>
</dbReference>
<dbReference type="PANTHER" id="PTHR11655:SF14">
    <property type="entry name" value="LARGE RIBOSOMAL SUBUNIT PROTEIN UL6M"/>
    <property type="match status" value="1"/>
</dbReference>
<dbReference type="Pfam" id="PF00347">
    <property type="entry name" value="Ribosomal_L6"/>
    <property type="match status" value="2"/>
</dbReference>
<dbReference type="PIRSF" id="PIRSF002162">
    <property type="entry name" value="Ribosomal_L6"/>
    <property type="match status" value="1"/>
</dbReference>
<dbReference type="PRINTS" id="PR00059">
    <property type="entry name" value="RIBOSOMALL6"/>
</dbReference>
<dbReference type="SUPFAM" id="SSF56053">
    <property type="entry name" value="Ribosomal protein L6"/>
    <property type="match status" value="2"/>
</dbReference>
<dbReference type="PROSITE" id="PS00525">
    <property type="entry name" value="RIBOSOMAL_L6_1"/>
    <property type="match status" value="1"/>
</dbReference>
<evidence type="ECO:0000250" key="1"/>
<evidence type="ECO:0000255" key="2">
    <source>
        <dbReference type="HAMAP-Rule" id="MF_01365"/>
    </source>
</evidence>
<evidence type="ECO:0000305" key="3"/>